<accession>P0ADK6</accession>
<accession>P24172</accession>
<accession>Q2M7Q7</accession>
<protein>
    <recommendedName>
        <fullName>Protein YibA</fullName>
    </recommendedName>
</protein>
<feature type="chain" id="PRO_0000169604" description="Protein YibA">
    <location>
        <begin position="1"/>
        <end position="280"/>
    </location>
</feature>
<feature type="helix" evidence="1">
    <location>
        <begin position="14"/>
        <end position="21"/>
    </location>
</feature>
<feature type="helix" evidence="1">
    <location>
        <begin position="25"/>
        <end position="31"/>
    </location>
</feature>
<feature type="helix" evidence="1">
    <location>
        <begin position="37"/>
        <end position="50"/>
    </location>
</feature>
<feature type="helix" evidence="1">
    <location>
        <begin position="53"/>
        <end position="63"/>
    </location>
</feature>
<feature type="helix" evidence="1">
    <location>
        <begin position="68"/>
        <end position="80"/>
    </location>
</feature>
<feature type="turn" evidence="1">
    <location>
        <begin position="85"/>
        <end position="87"/>
    </location>
</feature>
<feature type="helix" evidence="1">
    <location>
        <begin position="88"/>
        <end position="101"/>
    </location>
</feature>
<feature type="helix" evidence="1">
    <location>
        <begin position="105"/>
        <end position="121"/>
    </location>
</feature>
<feature type="helix" evidence="1">
    <location>
        <begin position="123"/>
        <end position="125"/>
    </location>
</feature>
<feature type="helix" evidence="1">
    <location>
        <begin position="126"/>
        <end position="136"/>
    </location>
</feature>
<feature type="helix" evidence="1">
    <location>
        <begin position="142"/>
        <end position="153"/>
    </location>
</feature>
<feature type="helix" evidence="1">
    <location>
        <begin position="161"/>
        <end position="168"/>
    </location>
</feature>
<feature type="helix" evidence="1">
    <location>
        <begin position="173"/>
        <end position="186"/>
    </location>
</feature>
<feature type="helix" evidence="1">
    <location>
        <begin position="191"/>
        <end position="200"/>
    </location>
</feature>
<feature type="helix" evidence="1">
    <location>
        <begin position="206"/>
        <end position="218"/>
    </location>
</feature>
<feature type="helix" evidence="1">
    <location>
        <begin position="222"/>
        <end position="224"/>
    </location>
</feature>
<feature type="helix" evidence="1">
    <location>
        <begin position="225"/>
        <end position="232"/>
    </location>
</feature>
<feature type="strand" evidence="1">
    <location>
        <begin position="234"/>
        <end position="236"/>
    </location>
</feature>
<feature type="helix" evidence="1">
    <location>
        <begin position="239"/>
        <end position="248"/>
    </location>
</feature>
<feature type="helix" evidence="1">
    <location>
        <begin position="251"/>
        <end position="253"/>
    </location>
</feature>
<feature type="helix" evidence="1">
    <location>
        <begin position="254"/>
        <end position="261"/>
    </location>
</feature>
<feature type="helix" evidence="1">
    <location>
        <begin position="268"/>
        <end position="277"/>
    </location>
</feature>
<dbReference type="EMBL" id="L19044">
    <property type="protein sequence ID" value="AAC95066.1"/>
    <property type="molecule type" value="Genomic_DNA"/>
</dbReference>
<dbReference type="EMBL" id="U00039">
    <property type="protein sequence ID" value="AAB18571.1"/>
    <property type="molecule type" value="Genomic_DNA"/>
</dbReference>
<dbReference type="EMBL" id="U00096">
    <property type="protein sequence ID" value="AAC76618.1"/>
    <property type="molecule type" value="Genomic_DNA"/>
</dbReference>
<dbReference type="EMBL" id="AP009048">
    <property type="protein sequence ID" value="BAE77699.1"/>
    <property type="molecule type" value="Genomic_DNA"/>
</dbReference>
<dbReference type="PIR" id="S47815">
    <property type="entry name" value="S47815"/>
</dbReference>
<dbReference type="RefSeq" id="NP_418051.1">
    <property type="nucleotide sequence ID" value="NC_000913.3"/>
</dbReference>
<dbReference type="RefSeq" id="WP_000072850.1">
    <property type="nucleotide sequence ID" value="NZ_SSZK01000022.1"/>
</dbReference>
<dbReference type="PDB" id="1OYZ">
    <property type="method" value="X-ray"/>
    <property type="resolution" value="2.10 A"/>
    <property type="chains" value="A=1-280"/>
</dbReference>
<dbReference type="PDBsum" id="1OYZ"/>
<dbReference type="SMR" id="P0ADK6"/>
<dbReference type="BioGRID" id="4262559">
    <property type="interactions" value="17"/>
</dbReference>
<dbReference type="BioGRID" id="852415">
    <property type="interactions" value="4"/>
</dbReference>
<dbReference type="DIP" id="DIP-48203N"/>
<dbReference type="FunCoup" id="P0ADK6">
    <property type="interactions" value="109"/>
</dbReference>
<dbReference type="IntAct" id="P0ADK6">
    <property type="interactions" value="11"/>
</dbReference>
<dbReference type="STRING" id="511145.b3594"/>
<dbReference type="jPOST" id="P0ADK6"/>
<dbReference type="PaxDb" id="511145-b3594"/>
<dbReference type="EnsemblBacteria" id="AAC76618">
    <property type="protein sequence ID" value="AAC76618"/>
    <property type="gene ID" value="b3594"/>
</dbReference>
<dbReference type="GeneID" id="948108"/>
<dbReference type="KEGG" id="ecj:JW3568"/>
<dbReference type="KEGG" id="eco:b3594"/>
<dbReference type="KEGG" id="ecoc:C3026_19485"/>
<dbReference type="PATRIC" id="fig|1411691.4.peg.3113"/>
<dbReference type="EchoBASE" id="EB1173"/>
<dbReference type="eggNOG" id="COG1413">
    <property type="taxonomic scope" value="Bacteria"/>
</dbReference>
<dbReference type="HOGENOM" id="CLU_086608_0_0_6"/>
<dbReference type="InParanoid" id="P0ADK6"/>
<dbReference type="OMA" id="EDENLAW"/>
<dbReference type="OrthoDB" id="8613467at2"/>
<dbReference type="BioCyc" id="EcoCyc:EG11187-MONOMER"/>
<dbReference type="EvolutionaryTrace" id="P0ADK6"/>
<dbReference type="PRO" id="PR:P0ADK6"/>
<dbReference type="Proteomes" id="UP000000625">
    <property type="component" value="Chromosome"/>
</dbReference>
<dbReference type="GO" id="GO:0016491">
    <property type="term" value="F:oxidoreductase activity"/>
    <property type="evidence" value="ECO:0000318"/>
    <property type="project" value="GO_Central"/>
</dbReference>
<dbReference type="GO" id="GO:0006974">
    <property type="term" value="P:DNA damage response"/>
    <property type="evidence" value="ECO:0000315"/>
    <property type="project" value="EcoCyc"/>
</dbReference>
<dbReference type="GO" id="GO:0046677">
    <property type="term" value="P:response to antibiotic"/>
    <property type="evidence" value="ECO:0000315"/>
    <property type="project" value="EcoCyc"/>
</dbReference>
<dbReference type="GO" id="GO:0009314">
    <property type="term" value="P:response to radiation"/>
    <property type="evidence" value="ECO:0000315"/>
    <property type="project" value="EcoCyc"/>
</dbReference>
<dbReference type="Gene3D" id="1.25.10.10">
    <property type="entry name" value="Leucine-rich Repeat Variant"/>
    <property type="match status" value="1"/>
</dbReference>
<dbReference type="InterPro" id="IPR011989">
    <property type="entry name" value="ARM-like"/>
</dbReference>
<dbReference type="InterPro" id="IPR016024">
    <property type="entry name" value="ARM-type_fold"/>
</dbReference>
<dbReference type="NCBIfam" id="NF007244">
    <property type="entry name" value="PRK09687.1"/>
    <property type="match status" value="1"/>
</dbReference>
<dbReference type="PANTHER" id="PTHR12697:SF5">
    <property type="entry name" value="DEOXYHYPUSINE HYDROXYLASE"/>
    <property type="match status" value="1"/>
</dbReference>
<dbReference type="PANTHER" id="PTHR12697">
    <property type="entry name" value="PBS LYASE HEAT-LIKE PROTEIN"/>
    <property type="match status" value="1"/>
</dbReference>
<dbReference type="Pfam" id="PF13646">
    <property type="entry name" value="HEAT_2"/>
    <property type="match status" value="1"/>
</dbReference>
<dbReference type="SUPFAM" id="SSF48371">
    <property type="entry name" value="ARM repeat"/>
    <property type="match status" value="1"/>
</dbReference>
<proteinExistence type="evidence at protein level"/>
<keyword id="KW-0002">3D-structure</keyword>
<keyword id="KW-1185">Reference proteome</keyword>
<evidence type="ECO:0007829" key="1">
    <source>
        <dbReference type="PDB" id="1OYZ"/>
    </source>
</evidence>
<gene>
    <name type="primary">yibA</name>
    <name type="ordered locus">b3594</name>
    <name type="ordered locus">JW3568</name>
</gene>
<sequence length="280" mass="31874">MSNTYQKRKASKEYGLYNQCKKLNDDELFRLLDDHNSLKRISSARVLQLRGGQDAVRLAIEFCSDKNYIRRDIGAFILGQIKICKKCEDNVFNILNNMALNDKSACVRATAIESTAQRCKKNPIYSPKIVEQSQITAFDKSTNVRRATAFAISVINDKATIPLLINLLKDPNGDVRNWAAFAININKYDNSDIRDCFVEMLQDKNEEVRIEAIIGLSYRKDKRVLSVLCDELKKNTVYDDIIEAAGELGDKTLLPVLDTMLYKFDDNEIITSAIDKLKRS</sequence>
<reference key="1">
    <citation type="journal article" date="1990" name="J. Bacteriol.">
        <title>Structure of the rhsA locus from Escherichia coli K-12 and comparison of rhsA with other members of the rhs multigene family.</title>
        <authorList>
            <person name="Feulner G."/>
            <person name="Gray J.A."/>
            <person name="Kirschman J.A."/>
            <person name="Lehner A.F."/>
            <person name="Sadosky A.B."/>
            <person name="Vlazny D.A."/>
            <person name="Zhang J."/>
            <person name="Zhao S."/>
            <person name="Hill C.W."/>
        </authorList>
    </citation>
    <scope>NUCLEOTIDE SEQUENCE [GENOMIC DNA]</scope>
    <source>
        <strain>K12</strain>
    </source>
</reference>
<reference key="2">
    <citation type="journal article" date="1994" name="Nucleic Acids Res.">
        <title>Analysis of the Escherichia coli genome. V. DNA sequence of the region from 76.0 to 81.5 minutes.</title>
        <authorList>
            <person name="Sofia H.J."/>
            <person name="Burland V."/>
            <person name="Daniels D.L."/>
            <person name="Plunkett G. III"/>
            <person name="Blattner F.R."/>
        </authorList>
    </citation>
    <scope>NUCLEOTIDE SEQUENCE [LARGE SCALE GENOMIC DNA]</scope>
    <source>
        <strain>K12 / MG1655 / ATCC 47076</strain>
    </source>
</reference>
<reference key="3">
    <citation type="journal article" date="1997" name="Science">
        <title>The complete genome sequence of Escherichia coli K-12.</title>
        <authorList>
            <person name="Blattner F.R."/>
            <person name="Plunkett G. III"/>
            <person name="Bloch C.A."/>
            <person name="Perna N.T."/>
            <person name="Burland V."/>
            <person name="Riley M."/>
            <person name="Collado-Vides J."/>
            <person name="Glasner J.D."/>
            <person name="Rode C.K."/>
            <person name="Mayhew G.F."/>
            <person name="Gregor J."/>
            <person name="Davis N.W."/>
            <person name="Kirkpatrick H.A."/>
            <person name="Goeden M.A."/>
            <person name="Rose D.J."/>
            <person name="Mau B."/>
            <person name="Shao Y."/>
        </authorList>
    </citation>
    <scope>NUCLEOTIDE SEQUENCE [LARGE SCALE GENOMIC DNA]</scope>
    <source>
        <strain>K12 / MG1655 / ATCC 47076</strain>
    </source>
</reference>
<reference key="4">
    <citation type="journal article" date="2006" name="Mol. Syst. Biol.">
        <title>Highly accurate genome sequences of Escherichia coli K-12 strains MG1655 and W3110.</title>
        <authorList>
            <person name="Hayashi K."/>
            <person name="Morooka N."/>
            <person name="Yamamoto Y."/>
            <person name="Fujita K."/>
            <person name="Isono K."/>
            <person name="Choi S."/>
            <person name="Ohtsubo E."/>
            <person name="Baba T."/>
            <person name="Wanner B.L."/>
            <person name="Mori H."/>
            <person name="Horiuchi T."/>
        </authorList>
    </citation>
    <scope>NUCLEOTIDE SEQUENCE [LARGE SCALE GENOMIC DNA]</scope>
    <source>
        <strain>K12 / W3110 / ATCC 27325 / DSM 5911</strain>
    </source>
</reference>
<reference key="5">
    <citation type="submission" date="2005-01" db="PDB data bank">
        <title>X-ray structure of YIBA_ECOLI northeast structural genomics consortium target ET31.</title>
        <authorList>
            <consortium name="Northeast structural genomics consortium (NESG)"/>
        </authorList>
    </citation>
    <scope>X-RAY CRYSTALLOGRAPHY (2.1 ANGSTROMS)</scope>
</reference>
<name>YIBA_ECOLI</name>
<organism>
    <name type="scientific">Escherichia coli (strain K12)</name>
    <dbReference type="NCBI Taxonomy" id="83333"/>
    <lineage>
        <taxon>Bacteria</taxon>
        <taxon>Pseudomonadati</taxon>
        <taxon>Pseudomonadota</taxon>
        <taxon>Gammaproteobacteria</taxon>
        <taxon>Enterobacterales</taxon>
        <taxon>Enterobacteriaceae</taxon>
        <taxon>Escherichia</taxon>
    </lineage>
</organism>